<geneLocation type="chloroplast"/>
<protein>
    <recommendedName>
        <fullName evidence="1">DNA-directed RNA polymerase subunit beta</fullName>
        <ecNumber evidence="1">2.7.7.6</ecNumber>
    </recommendedName>
    <alternativeName>
        <fullName evidence="1">PEP</fullName>
    </alternativeName>
    <alternativeName>
        <fullName evidence="1">Plastid-encoded RNA polymerase subunit beta</fullName>
        <shortName evidence="1">RNA polymerase subunit beta</shortName>
    </alternativeName>
</protein>
<dbReference type="EC" id="2.7.7.6" evidence="1"/>
<dbReference type="EMBL" id="AJ400848">
    <property type="protein sequence ID" value="CAB88717.1"/>
    <property type="molecule type" value="Genomic_DNA"/>
</dbReference>
<dbReference type="PIR" id="C29959">
    <property type="entry name" value="C29959"/>
</dbReference>
<dbReference type="RefSeq" id="NP_054924.1">
    <property type="nucleotide sequence ID" value="NC_002202.1"/>
</dbReference>
<dbReference type="PDB" id="8XZV">
    <property type="method" value="EM"/>
    <property type="resolution" value="3.16 A"/>
    <property type="chains" value="B=1-1070"/>
</dbReference>
<dbReference type="PDBsum" id="8XZV"/>
<dbReference type="EMDB" id="EMD-38799"/>
<dbReference type="SMR" id="P11703"/>
<dbReference type="FunCoup" id="P11703">
    <property type="interactions" value="189"/>
</dbReference>
<dbReference type="STRING" id="3562.P11703"/>
<dbReference type="GeneID" id="2715632"/>
<dbReference type="KEGG" id="soe:2715632"/>
<dbReference type="InParanoid" id="P11703"/>
<dbReference type="OrthoDB" id="1927092at2759"/>
<dbReference type="Proteomes" id="UP001155700">
    <property type="component" value="Chloroplast Pltd"/>
</dbReference>
<dbReference type="GO" id="GO:0009507">
    <property type="term" value="C:chloroplast"/>
    <property type="evidence" value="ECO:0007669"/>
    <property type="project" value="UniProtKB-SubCell"/>
</dbReference>
<dbReference type="GO" id="GO:0000428">
    <property type="term" value="C:DNA-directed RNA polymerase complex"/>
    <property type="evidence" value="ECO:0007669"/>
    <property type="project" value="UniProtKB-KW"/>
</dbReference>
<dbReference type="GO" id="GO:0005739">
    <property type="term" value="C:mitochondrion"/>
    <property type="evidence" value="ECO:0007669"/>
    <property type="project" value="GOC"/>
</dbReference>
<dbReference type="GO" id="GO:0003677">
    <property type="term" value="F:DNA binding"/>
    <property type="evidence" value="ECO:0007669"/>
    <property type="project" value="UniProtKB-UniRule"/>
</dbReference>
<dbReference type="GO" id="GO:0003899">
    <property type="term" value="F:DNA-directed RNA polymerase activity"/>
    <property type="evidence" value="ECO:0007669"/>
    <property type="project" value="UniProtKB-UniRule"/>
</dbReference>
<dbReference type="GO" id="GO:0032549">
    <property type="term" value="F:ribonucleoside binding"/>
    <property type="evidence" value="ECO:0007669"/>
    <property type="project" value="InterPro"/>
</dbReference>
<dbReference type="GO" id="GO:0006351">
    <property type="term" value="P:DNA-templated transcription"/>
    <property type="evidence" value="ECO:0007669"/>
    <property type="project" value="UniProtKB-UniRule"/>
</dbReference>
<dbReference type="CDD" id="cd00653">
    <property type="entry name" value="RNA_pol_B_RPB2"/>
    <property type="match status" value="1"/>
</dbReference>
<dbReference type="FunFam" id="3.90.1110.10:FF:000009">
    <property type="entry name" value="DNA-directed RNA polymerase subunit beta"/>
    <property type="match status" value="1"/>
</dbReference>
<dbReference type="Gene3D" id="2.40.50.100">
    <property type="match status" value="1"/>
</dbReference>
<dbReference type="Gene3D" id="2.40.50.150">
    <property type="match status" value="1"/>
</dbReference>
<dbReference type="Gene3D" id="3.90.1100.10">
    <property type="match status" value="1"/>
</dbReference>
<dbReference type="Gene3D" id="2.30.150.10">
    <property type="entry name" value="DNA-directed RNA polymerase, beta subunit, external 1 domain"/>
    <property type="match status" value="1"/>
</dbReference>
<dbReference type="Gene3D" id="2.40.270.10">
    <property type="entry name" value="DNA-directed RNA polymerase, subunit 2, domain 6"/>
    <property type="match status" value="2"/>
</dbReference>
<dbReference type="Gene3D" id="3.90.1800.10">
    <property type="entry name" value="RNA polymerase alpha subunit dimerisation domain"/>
    <property type="match status" value="1"/>
</dbReference>
<dbReference type="Gene3D" id="3.90.1110.10">
    <property type="entry name" value="RNA polymerase Rpb2, domain 2"/>
    <property type="match status" value="1"/>
</dbReference>
<dbReference type="HAMAP" id="MF_01321">
    <property type="entry name" value="RNApol_bact_RpoB"/>
    <property type="match status" value="1"/>
</dbReference>
<dbReference type="InterPro" id="IPR042107">
    <property type="entry name" value="DNA-dir_RNA_pol_bsu_ext_1_sf"/>
</dbReference>
<dbReference type="InterPro" id="IPR015712">
    <property type="entry name" value="DNA-dir_RNA_pol_su2"/>
</dbReference>
<dbReference type="InterPro" id="IPR007120">
    <property type="entry name" value="DNA-dir_RNAP_su2_dom"/>
</dbReference>
<dbReference type="InterPro" id="IPR037033">
    <property type="entry name" value="DNA-dir_RNAP_su2_hyb_sf"/>
</dbReference>
<dbReference type="InterPro" id="IPR010243">
    <property type="entry name" value="RNA_pol_bsu_bac"/>
</dbReference>
<dbReference type="InterPro" id="IPR007121">
    <property type="entry name" value="RNA_pol_bsu_CS"/>
</dbReference>
<dbReference type="InterPro" id="IPR007644">
    <property type="entry name" value="RNA_pol_bsu_protrusion"/>
</dbReference>
<dbReference type="InterPro" id="IPR007642">
    <property type="entry name" value="RNA_pol_Rpb2_2"/>
</dbReference>
<dbReference type="InterPro" id="IPR037034">
    <property type="entry name" value="RNA_pol_Rpb2_2_sf"/>
</dbReference>
<dbReference type="InterPro" id="IPR007645">
    <property type="entry name" value="RNA_pol_Rpb2_3"/>
</dbReference>
<dbReference type="InterPro" id="IPR007641">
    <property type="entry name" value="RNA_pol_Rpb2_7"/>
</dbReference>
<dbReference type="InterPro" id="IPR014724">
    <property type="entry name" value="RNA_pol_RPB2_OB-fold"/>
</dbReference>
<dbReference type="NCBIfam" id="NF001616">
    <property type="entry name" value="PRK00405.1"/>
    <property type="match status" value="1"/>
</dbReference>
<dbReference type="PANTHER" id="PTHR20856">
    <property type="entry name" value="DNA-DIRECTED RNA POLYMERASE I SUBUNIT 2"/>
    <property type="match status" value="1"/>
</dbReference>
<dbReference type="Pfam" id="PF04563">
    <property type="entry name" value="RNA_pol_Rpb2_1"/>
    <property type="match status" value="1"/>
</dbReference>
<dbReference type="Pfam" id="PF04561">
    <property type="entry name" value="RNA_pol_Rpb2_2"/>
    <property type="match status" value="1"/>
</dbReference>
<dbReference type="Pfam" id="PF04565">
    <property type="entry name" value="RNA_pol_Rpb2_3"/>
    <property type="match status" value="1"/>
</dbReference>
<dbReference type="Pfam" id="PF00562">
    <property type="entry name" value="RNA_pol_Rpb2_6"/>
    <property type="match status" value="1"/>
</dbReference>
<dbReference type="Pfam" id="PF04560">
    <property type="entry name" value="RNA_pol_Rpb2_7"/>
    <property type="match status" value="1"/>
</dbReference>
<dbReference type="SUPFAM" id="SSF64484">
    <property type="entry name" value="beta and beta-prime subunits of DNA dependent RNA-polymerase"/>
    <property type="match status" value="1"/>
</dbReference>
<dbReference type="PROSITE" id="PS01166">
    <property type="entry name" value="RNA_POL_BETA"/>
    <property type="match status" value="1"/>
</dbReference>
<comment type="function">
    <text>DNA-dependent RNA polymerase catalyzes the transcription of DNA into RNA using the four ribonucleoside triphosphates as substrates.</text>
</comment>
<comment type="catalytic activity">
    <reaction evidence="1">
        <text>RNA(n) + a ribonucleoside 5'-triphosphate = RNA(n+1) + diphosphate</text>
        <dbReference type="Rhea" id="RHEA:21248"/>
        <dbReference type="Rhea" id="RHEA-COMP:14527"/>
        <dbReference type="Rhea" id="RHEA-COMP:17342"/>
        <dbReference type="ChEBI" id="CHEBI:33019"/>
        <dbReference type="ChEBI" id="CHEBI:61557"/>
        <dbReference type="ChEBI" id="CHEBI:140395"/>
        <dbReference type="EC" id="2.7.7.6"/>
    </reaction>
</comment>
<comment type="subunit">
    <text evidence="1">In plastids the minimal PEP RNA polymerase catalytic core is composed of four subunits: alpha, beta, beta', and beta''. When a (nuclear-encoded) sigma factor is associated with the core the holoenzyme is formed, which can initiate transcription.</text>
</comment>
<comment type="subcellular location">
    <subcellularLocation>
        <location>Plastid</location>
        <location>Chloroplast</location>
    </subcellularLocation>
</comment>
<comment type="similarity">
    <text evidence="1">Belongs to the RNA polymerase beta chain family.</text>
</comment>
<proteinExistence type="evidence at protein level"/>
<keyword id="KW-0002">3D-structure</keyword>
<keyword id="KW-0150">Chloroplast</keyword>
<keyword id="KW-0240">DNA-directed RNA polymerase</keyword>
<keyword id="KW-0548">Nucleotidyltransferase</keyword>
<keyword id="KW-0934">Plastid</keyword>
<keyword id="KW-1185">Reference proteome</keyword>
<keyword id="KW-0804">Transcription</keyword>
<keyword id="KW-0808">Transferase</keyword>
<reference key="1">
    <citation type="journal article" date="1988" name="J. Mol. Biol.">
        <title>Spinach chloroplast rpoBC genes encode three subunits of the chloroplast RNA polymerase.</title>
        <authorList>
            <person name="Hudson G.S."/>
            <person name="Holton T.A."/>
            <person name="Whitfeld P.R."/>
            <person name="Bottomley W."/>
        </authorList>
    </citation>
    <scope>NUCLEOTIDE SEQUENCE [GENOMIC DNA]</scope>
</reference>
<reference key="2">
    <citation type="journal article" date="2001" name="Plant Mol. Biol.">
        <title>The plastid chromosome of spinach (Spinacia oleracea): complete nucleotide sequence and gene organization.</title>
        <authorList>
            <person name="Schmitz-Linneweber C."/>
            <person name="Maier R.M."/>
            <person name="Alcaraz J.-P."/>
            <person name="Cottet A."/>
            <person name="Herrmann R.G."/>
            <person name="Mache R."/>
        </authorList>
    </citation>
    <scope>NUCLEOTIDE SEQUENCE [LARGE SCALE GENOMIC DNA]</scope>
    <source>
        <strain>cv. Geant d'hiver</strain>
        <strain>cv. Monatol</strain>
    </source>
</reference>
<gene>
    <name evidence="1" type="primary">rpoB</name>
</gene>
<evidence type="ECO:0000255" key="1">
    <source>
        <dbReference type="HAMAP-Rule" id="MF_01321"/>
    </source>
</evidence>
<evidence type="ECO:0007829" key="2">
    <source>
        <dbReference type="PDB" id="8XZV"/>
    </source>
</evidence>
<name>RPOB_SPIOL</name>
<organism>
    <name type="scientific">Spinacia oleracea</name>
    <name type="common">Spinach</name>
    <dbReference type="NCBI Taxonomy" id="3562"/>
    <lineage>
        <taxon>Eukaryota</taxon>
        <taxon>Viridiplantae</taxon>
        <taxon>Streptophyta</taxon>
        <taxon>Embryophyta</taxon>
        <taxon>Tracheophyta</taxon>
        <taxon>Spermatophyta</taxon>
        <taxon>Magnoliopsida</taxon>
        <taxon>eudicotyledons</taxon>
        <taxon>Gunneridae</taxon>
        <taxon>Pentapetalae</taxon>
        <taxon>Caryophyllales</taxon>
        <taxon>Chenopodiaceae</taxon>
        <taxon>Chenopodioideae</taxon>
        <taxon>Anserineae</taxon>
        <taxon>Spinacia</taxon>
    </lineage>
</organism>
<sequence>MLRDGNEGMSTIPGFNQIQFEGFWRFIDQGLTEELSKFPKMEDTDQEIEFQLFVETYQLAEPLIKEKDAVYESLTYSSELYVSAGLIWKTRREMQEQTILIGNIPLMNSLGTFIVNGIYRIVINQILQSPGIYYRSELDHNGISVYTGTIISDWGGRSELEIDRKARIWARVSRKQKISILVLSSAMGSNLREILDNVCYPEIFLSFLNDKEKKKIGSKENAILEFYQQFACVGGDPVFSESLCKDLQKKFFQQRCELGRIGRRNMNRRLNLDIPENNTFLLPRDILAAADHLIGMKFGMGTLDDMNHLKHKRIRSVADLLQDQFGLALVRLENVVRGTISGAIRHKLIPTPQNLVTSTPLTTTFESFFGLHPLSQVLDRTNPLTQIVHGRKLSYLGPGGLTGRTASFRIRDIHPSHYGRICPIDTSEGINVGLIGSLAIHARIGPWGSLESPYYEISERSKRVQMLYLSPSRDEYYMLASGNSLALNQGIQEEQVVPARYRQEFLTIAWEQVHFRSIFSFQYFSIGASLIPFIEHNDANRALMSSNMQRQAVPLSQSEKCIVGTGLERQVALDSGVLAIAEHEGKIIYTNTDKIVLLGNGNTVSIPLVMYQRSNKNTCMHQKPQIPRGKCVKKGQILADGAATVGGELALGKNVLVAYMPWEGYNFEDAVLISERLVYEDIYTSFHIRKYEIQTYVTSQGPEKVTSEIPHLEAHLLRNLDKNGIVRLGSWVETGDILVGKLTPQMAKESSYAPEDRLLRAILGIQVSTSKETCLKLPIGGRGRVIDVRWIQKKGGSSYNPETIHVYISQKREIKVGDKVAGRHGNKGIISRILLRQDMPYLQDGRPVDMIFNPLGVPSRMNVGQIFECSLGLAGSLLDRHYRIAPFDERYEQEASRKLVFSELYEASKQTANPWVFEPEYPGKSRIFDGRTGDPFEQPVIIGNPYILKLIHQVDDKIHGRSSGHYALVTQQPLRGRAKQGGQRVGEMEVWALEGFGVAHILQEMLTYKSDHIKARQEVLGTTIIGGTIPNPEDAPESFRLLVRELRSLALELNHFLVSERNFQINRMEA</sequence>
<feature type="chain" id="PRO_0000048050" description="DNA-directed RNA polymerase subunit beta">
    <location>
        <begin position="1"/>
        <end position="1070"/>
    </location>
</feature>
<feature type="strand" evidence="2">
    <location>
        <begin position="7"/>
        <end position="11"/>
    </location>
</feature>
<feature type="helix" evidence="2">
    <location>
        <begin position="17"/>
        <end position="35"/>
    </location>
</feature>
<feature type="strand" evidence="2">
    <location>
        <begin position="46"/>
        <end position="50"/>
    </location>
</feature>
<feature type="strand" evidence="2">
    <location>
        <begin position="58"/>
        <end position="60"/>
    </location>
</feature>
<feature type="helix" evidence="2">
    <location>
        <begin position="66"/>
        <end position="71"/>
    </location>
</feature>
<feature type="strand" evidence="2">
    <location>
        <begin position="77"/>
        <end position="83"/>
    </location>
</feature>
<feature type="strand" evidence="2">
    <location>
        <begin position="86"/>
        <end position="88"/>
    </location>
</feature>
<feature type="turn" evidence="2">
    <location>
        <begin position="89"/>
        <end position="92"/>
    </location>
</feature>
<feature type="strand" evidence="2">
    <location>
        <begin position="93"/>
        <end position="95"/>
    </location>
</feature>
<feature type="strand" evidence="2">
    <location>
        <begin position="98"/>
        <end position="105"/>
    </location>
</feature>
<feature type="strand" evidence="2">
    <location>
        <begin position="113"/>
        <end position="115"/>
    </location>
</feature>
<feature type="strand" evidence="2">
    <location>
        <begin position="118"/>
        <end position="122"/>
    </location>
</feature>
<feature type="strand" evidence="2">
    <location>
        <begin position="124"/>
        <end position="128"/>
    </location>
</feature>
<feature type="strand" evidence="2">
    <location>
        <begin position="130"/>
        <end position="135"/>
    </location>
</feature>
<feature type="strand" evidence="2">
    <location>
        <begin position="146"/>
        <end position="151"/>
    </location>
</feature>
<feature type="strand" evidence="2">
    <location>
        <begin position="161"/>
        <end position="165"/>
    </location>
</feature>
<feature type="strand" evidence="2">
    <location>
        <begin position="173"/>
        <end position="175"/>
    </location>
</feature>
<feature type="strand" evidence="2">
    <location>
        <begin position="191"/>
        <end position="195"/>
    </location>
</feature>
<feature type="strand" evidence="2">
    <location>
        <begin position="197"/>
        <end position="199"/>
    </location>
</feature>
<feature type="helix" evidence="2">
    <location>
        <begin position="206"/>
        <end position="209"/>
    </location>
</feature>
<feature type="turn" evidence="2">
    <location>
        <begin position="210"/>
        <end position="212"/>
    </location>
</feature>
<feature type="strand" evidence="2">
    <location>
        <begin position="216"/>
        <end position="218"/>
    </location>
</feature>
<feature type="strand" evidence="2">
    <location>
        <begin position="221"/>
        <end position="224"/>
    </location>
</feature>
<feature type="strand" evidence="2">
    <location>
        <begin position="234"/>
        <end position="236"/>
    </location>
</feature>
<feature type="helix" evidence="2">
    <location>
        <begin position="241"/>
        <end position="251"/>
    </location>
</feature>
<feature type="turn" evidence="2">
    <location>
        <begin position="252"/>
        <end position="255"/>
    </location>
</feature>
<feature type="helix" evidence="2">
    <location>
        <begin position="259"/>
        <end position="269"/>
    </location>
</feature>
<feature type="helix" evidence="2">
    <location>
        <begin position="283"/>
        <end position="297"/>
    </location>
</feature>
<feature type="helix" evidence="2">
    <location>
        <begin position="309"/>
        <end position="311"/>
    </location>
</feature>
<feature type="strand" evidence="2">
    <location>
        <begin position="312"/>
        <end position="315"/>
    </location>
</feature>
<feature type="helix" evidence="2">
    <location>
        <begin position="317"/>
        <end position="342"/>
    </location>
</feature>
<feature type="turn" evidence="2">
    <location>
        <begin position="343"/>
        <end position="347"/>
    </location>
</feature>
<feature type="helix" evidence="2">
    <location>
        <begin position="352"/>
        <end position="355"/>
    </location>
</feature>
<feature type="helix" evidence="2">
    <location>
        <begin position="360"/>
        <end position="371"/>
    </location>
</feature>
<feature type="strand" evidence="2">
    <location>
        <begin position="375"/>
        <end position="377"/>
    </location>
</feature>
<feature type="helix" evidence="2">
    <location>
        <begin position="383"/>
        <end position="390"/>
    </location>
</feature>
<feature type="strand" evidence="2">
    <location>
        <begin position="391"/>
        <end position="395"/>
    </location>
</feature>
<feature type="strand" evidence="2">
    <location>
        <begin position="403"/>
        <end position="405"/>
    </location>
</feature>
<feature type="helix" evidence="2">
    <location>
        <begin position="409"/>
        <end position="411"/>
    </location>
</feature>
<feature type="strand" evidence="2">
    <location>
        <begin position="418"/>
        <end position="421"/>
    </location>
</feature>
<feature type="strand" evidence="2">
    <location>
        <begin position="429"/>
        <end position="431"/>
    </location>
</feature>
<feature type="turn" evidence="2">
    <location>
        <begin position="432"/>
        <end position="434"/>
    </location>
</feature>
<feature type="strand" evidence="2">
    <location>
        <begin position="435"/>
        <end position="437"/>
    </location>
</feature>
<feature type="helix" evidence="2">
    <location>
        <begin position="446"/>
        <end position="448"/>
    </location>
</feature>
<feature type="strand" evidence="2">
    <location>
        <begin position="450"/>
        <end position="456"/>
    </location>
</feature>
<feature type="strand" evidence="2">
    <location>
        <begin position="466"/>
        <end position="469"/>
    </location>
</feature>
<feature type="helix" evidence="2">
    <location>
        <begin position="471"/>
        <end position="474"/>
    </location>
</feature>
<feature type="helix" evidence="2">
    <location>
        <begin position="492"/>
        <end position="494"/>
    </location>
</feature>
<feature type="strand" evidence="2">
    <location>
        <begin position="496"/>
        <end position="498"/>
    </location>
</feature>
<feature type="strand" evidence="2">
    <location>
        <begin position="507"/>
        <end position="509"/>
    </location>
</feature>
<feature type="helix" evidence="2">
    <location>
        <begin position="510"/>
        <end position="512"/>
    </location>
</feature>
<feature type="helix" evidence="2">
    <location>
        <begin position="528"/>
        <end position="530"/>
    </location>
</feature>
<feature type="helix" evidence="2">
    <location>
        <begin position="534"/>
        <end position="536"/>
    </location>
</feature>
<feature type="helix" evidence="2">
    <location>
        <begin position="539"/>
        <end position="547"/>
    </location>
</feature>
<feature type="strand" evidence="2">
    <location>
        <begin position="562"/>
        <end position="564"/>
    </location>
</feature>
<feature type="helix" evidence="2">
    <location>
        <begin position="568"/>
        <end position="575"/>
    </location>
</feature>
<feature type="strand" evidence="2">
    <location>
        <begin position="578"/>
        <end position="580"/>
    </location>
</feature>
<feature type="strand" evidence="2">
    <location>
        <begin position="585"/>
        <end position="591"/>
    </location>
</feature>
<feature type="strand" evidence="2">
    <location>
        <begin position="594"/>
        <end position="598"/>
    </location>
</feature>
<feature type="strand" evidence="2">
    <location>
        <begin position="603"/>
        <end position="607"/>
    </location>
</feature>
<feature type="strand" evidence="2">
    <location>
        <begin position="637"/>
        <end position="640"/>
    </location>
</feature>
<feature type="strand" evidence="2">
    <location>
        <begin position="652"/>
        <end position="654"/>
    </location>
</feature>
<feature type="strand" evidence="2">
    <location>
        <begin position="657"/>
        <end position="659"/>
    </location>
</feature>
<feature type="strand" evidence="2">
    <location>
        <begin position="670"/>
        <end position="674"/>
    </location>
</feature>
<feature type="helix" evidence="2">
    <location>
        <begin position="676"/>
        <end position="679"/>
    </location>
</feature>
<feature type="strand" evidence="2">
    <location>
        <begin position="685"/>
        <end position="693"/>
    </location>
</feature>
<feature type="helix" evidence="2">
    <location>
        <begin position="714"/>
        <end position="717"/>
    </location>
</feature>
<feature type="strand" evidence="2">
    <location>
        <begin position="718"/>
        <end position="720"/>
    </location>
</feature>
<feature type="strand" evidence="2">
    <location>
        <begin position="722"/>
        <end position="726"/>
    </location>
</feature>
<feature type="strand" evidence="2">
    <location>
        <begin position="737"/>
        <end position="744"/>
    </location>
</feature>
<feature type="turn" evidence="2">
    <location>
        <begin position="749"/>
        <end position="751"/>
    </location>
</feature>
<feature type="helix" evidence="2">
    <location>
        <begin position="754"/>
        <end position="762"/>
    </location>
</feature>
<feature type="strand" evidence="2">
    <location>
        <begin position="769"/>
        <end position="771"/>
    </location>
</feature>
<feature type="strand" evidence="2">
    <location>
        <begin position="774"/>
        <end position="776"/>
    </location>
</feature>
<feature type="strand" evidence="2">
    <location>
        <begin position="783"/>
        <end position="791"/>
    </location>
</feature>
<feature type="strand" evidence="2">
    <location>
        <begin position="795"/>
        <end position="798"/>
    </location>
</feature>
<feature type="strand" evidence="2">
    <location>
        <begin position="803"/>
        <end position="812"/>
    </location>
</feature>
<feature type="strand" evidence="2">
    <location>
        <begin position="819"/>
        <end position="821"/>
    </location>
</feature>
<feature type="strand" evidence="2">
    <location>
        <begin position="823"/>
        <end position="825"/>
    </location>
</feature>
<feature type="strand" evidence="2">
    <location>
        <begin position="829"/>
        <end position="834"/>
    </location>
</feature>
<feature type="helix" evidence="2">
    <location>
        <begin position="836"/>
        <end position="838"/>
    </location>
</feature>
<feature type="strand" evidence="2">
    <location>
        <begin position="849"/>
        <end position="852"/>
    </location>
</feature>
<feature type="helix" evidence="2">
    <location>
        <begin position="856"/>
        <end position="860"/>
    </location>
</feature>
<feature type="helix" evidence="2">
    <location>
        <begin position="864"/>
        <end position="876"/>
    </location>
</feature>
<feature type="strand" evidence="2">
    <location>
        <begin position="881"/>
        <end position="883"/>
    </location>
</feature>
<feature type="turn" evidence="2">
    <location>
        <begin position="889"/>
        <end position="891"/>
    </location>
</feature>
<feature type="strand" evidence="2">
    <location>
        <begin position="892"/>
        <end position="894"/>
    </location>
</feature>
<feature type="helix" evidence="2">
    <location>
        <begin position="895"/>
        <end position="910"/>
    </location>
</feature>
<feature type="turn" evidence="2">
    <location>
        <begin position="930"/>
        <end position="932"/>
    </location>
</feature>
<feature type="strand" evidence="2">
    <location>
        <begin position="940"/>
        <end position="943"/>
    </location>
</feature>
<feature type="strand" evidence="2">
    <location>
        <begin position="946"/>
        <end position="951"/>
    </location>
</feature>
<feature type="helix" evidence="2">
    <location>
        <begin position="954"/>
        <end position="956"/>
    </location>
</feature>
<feature type="turn" evidence="2">
    <location>
        <begin position="968"/>
        <end position="970"/>
    </location>
</feature>
<feature type="turn" evidence="2">
    <location>
        <begin position="976"/>
        <end position="980"/>
    </location>
</feature>
<feature type="helix" evidence="2">
    <location>
        <begin position="988"/>
        <end position="995"/>
    </location>
</feature>
<feature type="helix" evidence="2">
    <location>
        <begin position="999"/>
        <end position="1004"/>
    </location>
</feature>
<feature type="helix" evidence="2">
    <location>
        <begin position="1007"/>
        <end position="1011"/>
    </location>
</feature>
<feature type="helix" evidence="2">
    <location>
        <begin position="1013"/>
        <end position="1024"/>
    </location>
</feature>
<feature type="helix" evidence="2">
    <location>
        <begin position="1037"/>
        <end position="1047"/>
    </location>
</feature>
<feature type="turn" evidence="2">
    <location>
        <begin position="1048"/>
        <end position="1050"/>
    </location>
</feature>
<feature type="strand" evidence="2">
    <location>
        <begin position="1054"/>
        <end position="1056"/>
    </location>
</feature>
<feature type="turn" evidence="2">
    <location>
        <begin position="1060"/>
        <end position="1062"/>
    </location>
</feature>
<accession>P11703</accession>